<reference key="1">
    <citation type="journal article" date="2002" name="J. Bacteriol.">
        <title>Whole-genome comparison of Mycobacterium tuberculosis clinical and laboratory strains.</title>
        <authorList>
            <person name="Fleischmann R.D."/>
            <person name="Alland D."/>
            <person name="Eisen J.A."/>
            <person name="Carpenter L."/>
            <person name="White O."/>
            <person name="Peterson J.D."/>
            <person name="DeBoy R.T."/>
            <person name="Dodson R.J."/>
            <person name="Gwinn M.L."/>
            <person name="Haft D.H."/>
            <person name="Hickey E.K."/>
            <person name="Kolonay J.F."/>
            <person name="Nelson W.C."/>
            <person name="Umayam L.A."/>
            <person name="Ermolaeva M.D."/>
            <person name="Salzberg S.L."/>
            <person name="Delcher A."/>
            <person name="Utterback T.R."/>
            <person name="Weidman J.F."/>
            <person name="Khouri H.M."/>
            <person name="Gill J."/>
            <person name="Mikula A."/>
            <person name="Bishai W."/>
            <person name="Jacobs W.R. Jr."/>
            <person name="Venter J.C."/>
            <person name="Fraser C.M."/>
        </authorList>
    </citation>
    <scope>NUCLEOTIDE SEQUENCE [LARGE SCALE GENOMIC DNA]</scope>
    <source>
        <strain>CDC 1551 / Oshkosh</strain>
    </source>
</reference>
<protein>
    <recommendedName>
        <fullName evidence="1">ESX-1 secretion system protein EccD1</fullName>
    </recommendedName>
    <alternativeName>
        <fullName evidence="1">ESX conserved component D1</fullName>
    </alternativeName>
    <alternativeName>
        <fullName evidence="1">Type VII secretion system protein EccD1</fullName>
        <shortName evidence="1">T7SS protein EccD1</shortName>
    </alternativeName>
</protein>
<comment type="function">
    <text evidence="1">Part of the ESX-1 specialized secretion system, which delivers several virulence factors to host cells during infection, including the key virulence factors EsxA (ESAT-6) and EsxB (CFP-10).</text>
</comment>
<comment type="subunit">
    <text evidence="1">Part of the ESX-1 / type VII secretion system (T7SS), which is composed of cytosolic and membrane components. The ESX-1 membrane complex is composed of EccB1, EccCa1, EccCb1, EccD1 and EccE1.</text>
</comment>
<comment type="subcellular location">
    <subcellularLocation>
        <location evidence="1">Cell inner membrane</location>
        <topology evidence="2">Multi-pass membrane protein</topology>
    </subcellularLocation>
</comment>
<comment type="similarity">
    <text evidence="3">Belongs to the EccD/Snm4 family.</text>
</comment>
<comment type="sequence caution" evidence="3">
    <conflict type="erroneous initiation">
        <sequence resource="EMBL-CDS" id="AAK48359"/>
    </conflict>
    <text>Truncated N-terminus.</text>
</comment>
<evidence type="ECO:0000250" key="1">
    <source>
        <dbReference type="UniProtKB" id="P9WNQ7"/>
    </source>
</evidence>
<evidence type="ECO:0000255" key="2"/>
<evidence type="ECO:0000305" key="3"/>
<accession>P9WNQ6</accession>
<accession>L0TGV6</accession>
<accession>O69741</accession>
<accession>Q7D4P2</accession>
<gene>
    <name evidence="1" type="primary">eccD1</name>
    <name type="synonym">snm4</name>
    <name type="ordered locus">MT3991</name>
</gene>
<name>ECCD1_MYCTO</name>
<keyword id="KW-0997">Cell inner membrane</keyword>
<keyword id="KW-1003">Cell membrane</keyword>
<keyword id="KW-0472">Membrane</keyword>
<keyword id="KW-1185">Reference proteome</keyword>
<keyword id="KW-0812">Transmembrane</keyword>
<keyword id="KW-1133">Transmembrane helix</keyword>
<keyword id="KW-0813">Transport</keyword>
<sequence length="511" mass="53999">MSAPAVAAGPTAAGATAARPATTRVTILTGRRMTDLVLPAAVPMETYIDDTVAVLSEVLEDTPADVLGGFDFTAQGVWAFARPGSPPLKLDQSLDDAGVVDGSLLTLVSVSRTERYRPLVEDVIDAIAVLDESPEFDRTALNRFVGAAIPLLTAPVIGMAMRAWWETGRSLWWPLAIGILGIAVLVGSFVANRFYQSGHLAECLLVTTYLLIATAAALAVPLPRGVNSLGAPQVAGAATAVLFLTLMTRGGPRKRHELASFAVITAIAVIAAAAAFGYGYQDWVPAGGIAFGLFIVTNAAKLTVAVARIALPPIPVPGETVDNEELLDPVATPEATSEETPTWQAIIASVPASAVRLTERSKLAKQLLIGYVTSGTLILAAGAIAVVVRGHFFVHSLVVAGLITTVCGFRSRLYAERWCAWALLAATVAIPTGLTAKLIIWYPHYAWLLLSVYLTVALVALVVVGSMAHVRRVSPVVKRTLELIDGAMIAAIIPMLLWITGVYDTVRNIRF</sequence>
<dbReference type="EMBL" id="AE000516">
    <property type="protein sequence ID" value="AAK48359.1"/>
    <property type="status" value="ALT_INIT"/>
    <property type="molecule type" value="Genomic_DNA"/>
</dbReference>
<dbReference type="PIR" id="C70803">
    <property type="entry name" value="C70803"/>
</dbReference>
<dbReference type="RefSeq" id="WP_003399976.1">
    <property type="nucleotide sequence ID" value="NZ_KK341228.1"/>
</dbReference>
<dbReference type="SMR" id="P9WNQ6"/>
<dbReference type="KEGG" id="mtc:MT3991"/>
<dbReference type="PATRIC" id="fig|83331.31.peg.4294"/>
<dbReference type="HOGENOM" id="CLU_038936_0_0_11"/>
<dbReference type="Proteomes" id="UP000001020">
    <property type="component" value="Chromosome"/>
</dbReference>
<dbReference type="GO" id="GO:0005886">
    <property type="term" value="C:plasma membrane"/>
    <property type="evidence" value="ECO:0007669"/>
    <property type="project" value="UniProtKB-SubCell"/>
</dbReference>
<dbReference type="FunFam" id="3.10.20.90:FF:000403">
    <property type="entry name" value="ESX-1 secretion system protein EccD1"/>
    <property type="match status" value="1"/>
</dbReference>
<dbReference type="Gene3D" id="3.10.20.90">
    <property type="entry name" value="Phosphatidylinositol 3-kinase Catalytic Subunit, Chain A, domain 1"/>
    <property type="match status" value="1"/>
</dbReference>
<dbReference type="InterPro" id="IPR006707">
    <property type="entry name" value="T7SS_EccD"/>
</dbReference>
<dbReference type="InterPro" id="IPR024962">
    <property type="entry name" value="YukD-like"/>
</dbReference>
<dbReference type="NCBIfam" id="TIGR03920">
    <property type="entry name" value="T7SS_EccD"/>
    <property type="match status" value="1"/>
</dbReference>
<dbReference type="Pfam" id="PF08817">
    <property type="entry name" value="YukD"/>
    <property type="match status" value="1"/>
</dbReference>
<dbReference type="PIRSF" id="PIRSF017804">
    <property type="entry name" value="Secretion_EccD1"/>
    <property type="match status" value="1"/>
</dbReference>
<feature type="chain" id="PRO_0000427085" description="ESX-1 secretion system protein EccD1">
    <location>
        <begin position="1"/>
        <end position="511"/>
    </location>
</feature>
<feature type="transmembrane region" description="Helical" evidence="2">
    <location>
        <begin position="144"/>
        <end position="164"/>
    </location>
</feature>
<feature type="transmembrane region" description="Helical" evidence="2">
    <location>
        <begin position="171"/>
        <end position="191"/>
    </location>
</feature>
<feature type="transmembrane region" description="Helical" evidence="2">
    <location>
        <begin position="203"/>
        <end position="223"/>
    </location>
</feature>
<feature type="transmembrane region" description="Helical" evidence="2">
    <location>
        <begin position="228"/>
        <end position="248"/>
    </location>
</feature>
<feature type="transmembrane region" description="Helical" evidence="2">
    <location>
        <begin position="258"/>
        <end position="278"/>
    </location>
</feature>
<feature type="transmembrane region" description="Helical" evidence="2">
    <location>
        <begin position="286"/>
        <end position="306"/>
    </location>
</feature>
<feature type="transmembrane region" description="Helical" evidence="2">
    <location>
        <begin position="368"/>
        <end position="388"/>
    </location>
</feature>
<feature type="transmembrane region" description="Helical" evidence="2">
    <location>
        <begin position="389"/>
        <end position="409"/>
    </location>
</feature>
<feature type="transmembrane region" description="Helical" evidence="2">
    <location>
        <begin position="421"/>
        <end position="441"/>
    </location>
</feature>
<feature type="transmembrane region" description="Helical" evidence="2">
    <location>
        <begin position="445"/>
        <end position="465"/>
    </location>
</feature>
<feature type="transmembrane region" description="Helical" evidence="2">
    <location>
        <begin position="483"/>
        <end position="503"/>
    </location>
</feature>
<organism>
    <name type="scientific">Mycobacterium tuberculosis (strain CDC 1551 / Oshkosh)</name>
    <dbReference type="NCBI Taxonomy" id="83331"/>
    <lineage>
        <taxon>Bacteria</taxon>
        <taxon>Bacillati</taxon>
        <taxon>Actinomycetota</taxon>
        <taxon>Actinomycetes</taxon>
        <taxon>Mycobacteriales</taxon>
        <taxon>Mycobacteriaceae</taxon>
        <taxon>Mycobacterium</taxon>
        <taxon>Mycobacterium tuberculosis complex</taxon>
    </lineage>
</organism>
<proteinExistence type="inferred from homology"/>